<organism>
    <name type="scientific">Xanthomonas euvesicatoria pv. vesicatoria (strain 85-10)</name>
    <name type="common">Xanthomonas campestris pv. vesicatoria</name>
    <dbReference type="NCBI Taxonomy" id="316273"/>
    <lineage>
        <taxon>Bacteria</taxon>
        <taxon>Pseudomonadati</taxon>
        <taxon>Pseudomonadota</taxon>
        <taxon>Gammaproteobacteria</taxon>
        <taxon>Lysobacterales</taxon>
        <taxon>Lysobacteraceae</taxon>
        <taxon>Xanthomonas</taxon>
    </lineage>
</organism>
<name>DAPF_XANE5</name>
<reference key="1">
    <citation type="journal article" date="2005" name="J. Bacteriol.">
        <title>Insights into genome plasticity and pathogenicity of the plant pathogenic Bacterium Xanthomonas campestris pv. vesicatoria revealed by the complete genome sequence.</title>
        <authorList>
            <person name="Thieme F."/>
            <person name="Koebnik R."/>
            <person name="Bekel T."/>
            <person name="Berger C."/>
            <person name="Boch J."/>
            <person name="Buettner D."/>
            <person name="Caldana C."/>
            <person name="Gaigalat L."/>
            <person name="Goesmann A."/>
            <person name="Kay S."/>
            <person name="Kirchner O."/>
            <person name="Lanz C."/>
            <person name="Linke B."/>
            <person name="McHardy A.C."/>
            <person name="Meyer F."/>
            <person name="Mittenhuber G."/>
            <person name="Nies D.H."/>
            <person name="Niesbach-Kloesgen U."/>
            <person name="Patschkowski T."/>
            <person name="Rueckert C."/>
            <person name="Rupp O."/>
            <person name="Schneiker S."/>
            <person name="Schuster S.C."/>
            <person name="Vorhoelter F.J."/>
            <person name="Weber E."/>
            <person name="Puehler A."/>
            <person name="Bonas U."/>
            <person name="Bartels D."/>
            <person name="Kaiser O."/>
        </authorList>
    </citation>
    <scope>NUCLEOTIDE SEQUENCE [LARGE SCALE GENOMIC DNA]</scope>
    <source>
        <strain>85-10</strain>
    </source>
</reference>
<sequence length="284" mass="30150">MSADGRSGRLRFTKMHGAGNDFVVLDLRDGTPPPDAALAAQLADRHFGVGCDQILTIEAPRSEGAVAAYGIWNSDGSAARQCGNGARCVAAWLVRDGTAQGERFIIDSPMSAHAVERLDGDRYAVAMGVPQFEPAQIPLAGFAHARDEYALPVHGETVRFGAVSMGNPHAVVEVGRVDAAPVERVGALLQQNAAFPDSVNVGFVQVVDPAHVRLRVFERGVGETLACGSGACAAAVVLMQRGRVERDVQVSLPGGELRIRWPGDQEQVVMSGPAVFVFDGEWNR</sequence>
<keyword id="KW-0028">Amino-acid biosynthesis</keyword>
<keyword id="KW-0963">Cytoplasm</keyword>
<keyword id="KW-0413">Isomerase</keyword>
<keyword id="KW-0457">Lysine biosynthesis</keyword>
<protein>
    <recommendedName>
        <fullName evidence="1">Diaminopimelate epimerase</fullName>
        <shortName evidence="1">DAP epimerase</shortName>
        <ecNumber evidence="1">5.1.1.7</ecNumber>
    </recommendedName>
    <alternativeName>
        <fullName evidence="1">PLP-independent amino acid racemase</fullName>
    </alternativeName>
</protein>
<dbReference type="EC" id="5.1.1.7" evidence="1"/>
<dbReference type="EMBL" id="AM039952">
    <property type="protein sequence ID" value="CAJ22320.1"/>
    <property type="molecule type" value="Genomic_DNA"/>
</dbReference>
<dbReference type="RefSeq" id="WP_011346311.1">
    <property type="nucleotide sequence ID" value="NZ_CP017190.1"/>
</dbReference>
<dbReference type="SMR" id="Q3BXU3"/>
<dbReference type="STRING" id="456327.BJD11_19375"/>
<dbReference type="KEGG" id="xcv:XCV0689"/>
<dbReference type="eggNOG" id="COG0253">
    <property type="taxonomic scope" value="Bacteria"/>
</dbReference>
<dbReference type="HOGENOM" id="CLU_053306_1_1_6"/>
<dbReference type="UniPathway" id="UPA00034">
    <property type="reaction ID" value="UER00025"/>
</dbReference>
<dbReference type="Proteomes" id="UP000007069">
    <property type="component" value="Chromosome"/>
</dbReference>
<dbReference type="GO" id="GO:0005829">
    <property type="term" value="C:cytosol"/>
    <property type="evidence" value="ECO:0007669"/>
    <property type="project" value="TreeGrafter"/>
</dbReference>
<dbReference type="GO" id="GO:0008837">
    <property type="term" value="F:diaminopimelate epimerase activity"/>
    <property type="evidence" value="ECO:0007669"/>
    <property type="project" value="UniProtKB-UniRule"/>
</dbReference>
<dbReference type="GO" id="GO:0009089">
    <property type="term" value="P:lysine biosynthetic process via diaminopimelate"/>
    <property type="evidence" value="ECO:0007669"/>
    <property type="project" value="UniProtKB-UniRule"/>
</dbReference>
<dbReference type="FunFam" id="3.10.310.10:FF:000001">
    <property type="entry name" value="Diaminopimelate epimerase"/>
    <property type="match status" value="1"/>
</dbReference>
<dbReference type="FunFam" id="3.10.310.10:FF:000004">
    <property type="entry name" value="Diaminopimelate epimerase"/>
    <property type="match status" value="1"/>
</dbReference>
<dbReference type="Gene3D" id="3.10.310.10">
    <property type="entry name" value="Diaminopimelate Epimerase, Chain A, domain 1"/>
    <property type="match status" value="2"/>
</dbReference>
<dbReference type="HAMAP" id="MF_00197">
    <property type="entry name" value="DAP_epimerase"/>
    <property type="match status" value="1"/>
</dbReference>
<dbReference type="InterPro" id="IPR018510">
    <property type="entry name" value="DAP_epimerase_AS"/>
</dbReference>
<dbReference type="InterPro" id="IPR001653">
    <property type="entry name" value="DAP_epimerase_DapF"/>
</dbReference>
<dbReference type="NCBIfam" id="TIGR00652">
    <property type="entry name" value="DapF"/>
    <property type="match status" value="1"/>
</dbReference>
<dbReference type="PANTHER" id="PTHR31689:SF0">
    <property type="entry name" value="DIAMINOPIMELATE EPIMERASE"/>
    <property type="match status" value="1"/>
</dbReference>
<dbReference type="PANTHER" id="PTHR31689">
    <property type="entry name" value="DIAMINOPIMELATE EPIMERASE, CHLOROPLASTIC"/>
    <property type="match status" value="1"/>
</dbReference>
<dbReference type="Pfam" id="PF01678">
    <property type="entry name" value="DAP_epimerase"/>
    <property type="match status" value="2"/>
</dbReference>
<dbReference type="SUPFAM" id="SSF54506">
    <property type="entry name" value="Diaminopimelate epimerase-like"/>
    <property type="match status" value="2"/>
</dbReference>
<dbReference type="PROSITE" id="PS01326">
    <property type="entry name" value="DAP_EPIMERASE"/>
    <property type="match status" value="1"/>
</dbReference>
<comment type="function">
    <text evidence="1">Catalyzes the stereoinversion of LL-2,6-diaminopimelate (L,L-DAP) to meso-diaminopimelate (meso-DAP), a precursor of L-lysine and an essential component of the bacterial peptidoglycan.</text>
</comment>
<comment type="catalytic activity">
    <reaction evidence="1">
        <text>(2S,6S)-2,6-diaminopimelate = meso-2,6-diaminopimelate</text>
        <dbReference type="Rhea" id="RHEA:15393"/>
        <dbReference type="ChEBI" id="CHEBI:57609"/>
        <dbReference type="ChEBI" id="CHEBI:57791"/>
        <dbReference type="EC" id="5.1.1.7"/>
    </reaction>
</comment>
<comment type="pathway">
    <text evidence="1">Amino-acid biosynthesis; L-lysine biosynthesis via DAP pathway; DL-2,6-diaminopimelate from LL-2,6-diaminopimelate: step 1/1.</text>
</comment>
<comment type="subunit">
    <text evidence="1">Homodimer.</text>
</comment>
<comment type="subcellular location">
    <subcellularLocation>
        <location evidence="1">Cytoplasm</location>
    </subcellularLocation>
</comment>
<comment type="similarity">
    <text evidence="1">Belongs to the diaminopimelate epimerase family.</text>
</comment>
<gene>
    <name evidence="1" type="primary">dapF</name>
    <name type="ordered locus">XCV0689</name>
</gene>
<proteinExistence type="inferred from homology"/>
<evidence type="ECO:0000255" key="1">
    <source>
        <dbReference type="HAMAP-Rule" id="MF_00197"/>
    </source>
</evidence>
<feature type="chain" id="PRO_1000011983" description="Diaminopimelate epimerase">
    <location>
        <begin position="1"/>
        <end position="284"/>
    </location>
</feature>
<feature type="active site" description="Proton donor" evidence="1">
    <location>
        <position position="82"/>
    </location>
</feature>
<feature type="active site" description="Proton acceptor" evidence="1">
    <location>
        <position position="227"/>
    </location>
</feature>
<feature type="binding site" evidence="1">
    <location>
        <position position="20"/>
    </location>
    <ligand>
        <name>substrate</name>
    </ligand>
</feature>
<feature type="binding site" evidence="1">
    <location>
        <position position="53"/>
    </location>
    <ligand>
        <name>substrate</name>
    </ligand>
</feature>
<feature type="binding site" evidence="1">
    <location>
        <position position="73"/>
    </location>
    <ligand>
        <name>substrate</name>
    </ligand>
</feature>
<feature type="binding site" evidence="1">
    <location>
        <begin position="83"/>
        <end position="84"/>
    </location>
    <ligand>
        <name>substrate</name>
    </ligand>
</feature>
<feature type="binding site" evidence="1">
    <location>
        <position position="167"/>
    </location>
    <ligand>
        <name>substrate</name>
    </ligand>
</feature>
<feature type="binding site" evidence="1">
    <location>
        <position position="200"/>
    </location>
    <ligand>
        <name>substrate</name>
    </ligand>
</feature>
<feature type="binding site" evidence="1">
    <location>
        <begin position="218"/>
        <end position="219"/>
    </location>
    <ligand>
        <name>substrate</name>
    </ligand>
</feature>
<feature type="binding site" evidence="1">
    <location>
        <begin position="228"/>
        <end position="229"/>
    </location>
    <ligand>
        <name>substrate</name>
    </ligand>
</feature>
<feature type="site" description="Could be important to modulate the pK values of the two catalytic cysteine residues" evidence="1">
    <location>
        <position position="169"/>
    </location>
</feature>
<feature type="site" description="Could be important to modulate the pK values of the two catalytic cysteine residues" evidence="1">
    <location>
        <position position="218"/>
    </location>
</feature>
<feature type="site" description="Important for dimerization" evidence="1">
    <location>
        <position position="278"/>
    </location>
</feature>
<accession>Q3BXU3</accession>